<proteinExistence type="evidence at protein level"/>
<gene>
    <name evidence="1" type="primary">deaD</name>
    <name evidence="1" type="synonym">csdA</name>
    <name type="ordered locus">Rv1253</name>
    <name type="ORF">MTCY50.29c</name>
</gene>
<protein>
    <recommendedName>
        <fullName evidence="1">ATP-dependent RNA helicase DeaD</fullName>
        <ecNumber evidence="1">3.6.4.13</ecNumber>
    </recommendedName>
    <alternativeName>
        <fullName evidence="1">Cold-shock DEAD box protein A</fullName>
    </alternativeName>
</protein>
<feature type="chain" id="PRO_0000055106" description="ATP-dependent RNA helicase DeaD">
    <location>
        <begin position="1"/>
        <end position="563"/>
    </location>
</feature>
<feature type="domain" description="Helicase ATP-binding" evidence="1">
    <location>
        <begin position="44"/>
        <end position="215"/>
    </location>
</feature>
<feature type="domain" description="Helicase C-terminal" evidence="1">
    <location>
        <begin position="226"/>
        <end position="385"/>
    </location>
</feature>
<feature type="region of interest" description="Disordered" evidence="2">
    <location>
        <begin position="441"/>
        <end position="470"/>
    </location>
</feature>
<feature type="region of interest" description="Disordered" evidence="2">
    <location>
        <begin position="543"/>
        <end position="563"/>
    </location>
</feature>
<feature type="short sequence motif" description="Q motif">
    <location>
        <begin position="13"/>
        <end position="41"/>
    </location>
</feature>
<feature type="short sequence motif" description="DEAD box">
    <location>
        <begin position="163"/>
        <end position="166"/>
    </location>
</feature>
<feature type="compositionally biased region" description="Basic and acidic residues" evidence="2">
    <location>
        <begin position="451"/>
        <end position="461"/>
    </location>
</feature>
<feature type="compositionally biased region" description="Basic residues" evidence="2">
    <location>
        <begin position="551"/>
        <end position="563"/>
    </location>
</feature>
<feature type="binding site" evidence="1">
    <location>
        <begin position="57"/>
        <end position="64"/>
    </location>
    <ligand>
        <name>ATP</name>
        <dbReference type="ChEBI" id="CHEBI:30616"/>
    </ligand>
</feature>
<comment type="function">
    <text evidence="1">DEAD-box RNA helicase involved in various cellular processes at low temperature, including ribosome biogenesis, mRNA degradation and translation initiation.</text>
</comment>
<comment type="catalytic activity">
    <reaction evidence="1">
        <text>ATP + H2O = ADP + phosphate + H(+)</text>
        <dbReference type="Rhea" id="RHEA:13065"/>
        <dbReference type="ChEBI" id="CHEBI:15377"/>
        <dbReference type="ChEBI" id="CHEBI:15378"/>
        <dbReference type="ChEBI" id="CHEBI:30616"/>
        <dbReference type="ChEBI" id="CHEBI:43474"/>
        <dbReference type="ChEBI" id="CHEBI:456216"/>
        <dbReference type="EC" id="3.6.4.13"/>
    </reaction>
</comment>
<comment type="subcellular location">
    <subcellularLocation>
        <location evidence="1">Cytoplasm</location>
    </subcellularLocation>
</comment>
<comment type="similarity">
    <text evidence="1">Belongs to the DEAD box helicase family. DeaD/CsdA subfamily.</text>
</comment>
<evidence type="ECO:0000255" key="1">
    <source>
        <dbReference type="HAMAP-Rule" id="MF_00964"/>
    </source>
</evidence>
<evidence type="ECO:0000256" key="2">
    <source>
        <dbReference type="SAM" id="MobiDB-lite"/>
    </source>
</evidence>
<name>DEAD_MYCTU</name>
<organism>
    <name type="scientific">Mycobacterium tuberculosis (strain ATCC 25618 / H37Rv)</name>
    <dbReference type="NCBI Taxonomy" id="83332"/>
    <lineage>
        <taxon>Bacteria</taxon>
        <taxon>Bacillati</taxon>
        <taxon>Actinomycetota</taxon>
        <taxon>Actinomycetes</taxon>
        <taxon>Mycobacteriales</taxon>
        <taxon>Mycobacteriaceae</taxon>
        <taxon>Mycobacterium</taxon>
        <taxon>Mycobacterium tuberculosis complex</taxon>
    </lineage>
</organism>
<accession>P9WH05</accession>
<accession>L0T8U3</accession>
<accession>Q11039</accession>
<reference key="1">
    <citation type="journal article" date="1998" name="Nature">
        <title>Deciphering the biology of Mycobacterium tuberculosis from the complete genome sequence.</title>
        <authorList>
            <person name="Cole S.T."/>
            <person name="Brosch R."/>
            <person name="Parkhill J."/>
            <person name="Garnier T."/>
            <person name="Churcher C.M."/>
            <person name="Harris D.E."/>
            <person name="Gordon S.V."/>
            <person name="Eiglmeier K."/>
            <person name="Gas S."/>
            <person name="Barry C.E. III"/>
            <person name="Tekaia F."/>
            <person name="Badcock K."/>
            <person name="Basham D."/>
            <person name="Brown D."/>
            <person name="Chillingworth T."/>
            <person name="Connor R."/>
            <person name="Davies R.M."/>
            <person name="Devlin K."/>
            <person name="Feltwell T."/>
            <person name="Gentles S."/>
            <person name="Hamlin N."/>
            <person name="Holroyd S."/>
            <person name="Hornsby T."/>
            <person name="Jagels K."/>
            <person name="Krogh A."/>
            <person name="McLean J."/>
            <person name="Moule S."/>
            <person name="Murphy L.D."/>
            <person name="Oliver S."/>
            <person name="Osborne J."/>
            <person name="Quail M.A."/>
            <person name="Rajandream M.A."/>
            <person name="Rogers J."/>
            <person name="Rutter S."/>
            <person name="Seeger K."/>
            <person name="Skelton S."/>
            <person name="Squares S."/>
            <person name="Squares R."/>
            <person name="Sulston J.E."/>
            <person name="Taylor K."/>
            <person name="Whitehead S."/>
            <person name="Barrell B.G."/>
        </authorList>
    </citation>
    <scope>NUCLEOTIDE SEQUENCE [LARGE SCALE GENOMIC DNA]</scope>
    <source>
        <strain>ATCC 25618 / H37Rv</strain>
    </source>
</reference>
<reference key="2">
    <citation type="journal article" date="2011" name="Mol. Cell. Proteomics">
        <title>Proteogenomic analysis of Mycobacterium tuberculosis by high resolution mass spectrometry.</title>
        <authorList>
            <person name="Kelkar D.S."/>
            <person name="Kumar D."/>
            <person name="Kumar P."/>
            <person name="Balakrishnan L."/>
            <person name="Muthusamy B."/>
            <person name="Yadav A.K."/>
            <person name="Shrivastava P."/>
            <person name="Marimuthu A."/>
            <person name="Anand S."/>
            <person name="Sundaram H."/>
            <person name="Kingsbury R."/>
            <person name="Harsha H.C."/>
            <person name="Nair B."/>
            <person name="Prasad T.S."/>
            <person name="Chauhan D.S."/>
            <person name="Katoch K."/>
            <person name="Katoch V.M."/>
            <person name="Kumar P."/>
            <person name="Chaerkady R."/>
            <person name="Ramachandran S."/>
            <person name="Dash D."/>
            <person name="Pandey A."/>
        </authorList>
    </citation>
    <scope>IDENTIFICATION BY MASS SPECTROMETRY [LARGE SCALE ANALYSIS]</scope>
    <source>
        <strain>ATCC 25618 / H37Rv</strain>
    </source>
</reference>
<sequence length="563" mass="61453">MAFPEYSPAASAATFADLQIHPRVLRAIGDVGYESPTAIQAATIPALMAGSDVVGLAQTGTGKTAAFAIPMLSKIDITSKVPQALVLVPTRELALQVAEAFGRYGAYLSQLNVLPIYGGSSYAVQLAGLRRGAQVVVGTPGRMIDHLERATLDLSRVDFLVLDEADEMLTMGFADDVERILSETPEYKQVALFSATMPPAIRKLSAKYLHDPFEVTCKAKTAVAENISQSYIQVARKMDALTRVLEVEPFEAMIVFVRTKQATEEIAEKLRARGFSAAAISGDVPQAQRERTITALRDGDIDILVATDVAARGLDVERISHVLNYDIPHDTESYVHRIGRTGRAGRSGAALIFVSPRELHLLKAIEKATRQTLTEAQLPTVEDVNTQRVAKFADSITNALGGPGIELFRRLVEEYEREHDVPMADIAAALAVQCRGGEAFLMAPDPPLSRRNRDQRRDRPQRPKRRPDLTTYRVAVGKRHKIGPGAIVGAIANEGGLHRSDFGQIRIGPDFSLVELPAKLPRATLKKLAQTRISGVLIDLRPYRPPDAARRHNGGKPRRKHVG</sequence>
<dbReference type="EC" id="3.6.4.13" evidence="1"/>
<dbReference type="EMBL" id="AL123456">
    <property type="protein sequence ID" value="CCP44009.1"/>
    <property type="molecule type" value="Genomic_DNA"/>
</dbReference>
<dbReference type="PIR" id="E70752">
    <property type="entry name" value="E70752"/>
</dbReference>
<dbReference type="RefSeq" id="NP_215769.1">
    <property type="nucleotide sequence ID" value="NC_000962.3"/>
</dbReference>
<dbReference type="RefSeq" id="WP_003898793.1">
    <property type="nucleotide sequence ID" value="NZ_NVQJ01000049.1"/>
</dbReference>
<dbReference type="SMR" id="P9WH05"/>
<dbReference type="FunCoup" id="P9WH05">
    <property type="interactions" value="342"/>
</dbReference>
<dbReference type="STRING" id="83332.Rv1253"/>
<dbReference type="PaxDb" id="83332-Rv1253"/>
<dbReference type="DNASU" id="887069"/>
<dbReference type="GeneID" id="887069"/>
<dbReference type="KEGG" id="mtu:Rv1253"/>
<dbReference type="KEGG" id="mtv:RVBD_1253"/>
<dbReference type="TubercuList" id="Rv1253"/>
<dbReference type="eggNOG" id="COG0513">
    <property type="taxonomic scope" value="Bacteria"/>
</dbReference>
<dbReference type="InParanoid" id="P9WH05"/>
<dbReference type="OrthoDB" id="9805696at2"/>
<dbReference type="PhylomeDB" id="P9WH05"/>
<dbReference type="Proteomes" id="UP000001584">
    <property type="component" value="Chromosome"/>
</dbReference>
<dbReference type="GO" id="GO:0005829">
    <property type="term" value="C:cytosol"/>
    <property type="evidence" value="ECO:0007005"/>
    <property type="project" value="MTBBASE"/>
</dbReference>
<dbReference type="GO" id="GO:0009274">
    <property type="term" value="C:peptidoglycan-based cell wall"/>
    <property type="evidence" value="ECO:0007005"/>
    <property type="project" value="MTBBASE"/>
</dbReference>
<dbReference type="GO" id="GO:0005524">
    <property type="term" value="F:ATP binding"/>
    <property type="evidence" value="ECO:0007669"/>
    <property type="project" value="UniProtKB-UniRule"/>
</dbReference>
<dbReference type="GO" id="GO:0016887">
    <property type="term" value="F:ATP hydrolysis activity"/>
    <property type="evidence" value="ECO:0007669"/>
    <property type="project" value="RHEA"/>
</dbReference>
<dbReference type="GO" id="GO:0003724">
    <property type="term" value="F:RNA helicase activity"/>
    <property type="evidence" value="ECO:0000318"/>
    <property type="project" value="GO_Central"/>
</dbReference>
<dbReference type="GO" id="GO:0033592">
    <property type="term" value="F:RNA strand annealing activity"/>
    <property type="evidence" value="ECO:0000318"/>
    <property type="project" value="GO_Central"/>
</dbReference>
<dbReference type="GO" id="GO:0070417">
    <property type="term" value="P:cellular response to cold"/>
    <property type="evidence" value="ECO:0007669"/>
    <property type="project" value="InterPro"/>
</dbReference>
<dbReference type="GO" id="GO:0009409">
    <property type="term" value="P:response to cold"/>
    <property type="evidence" value="ECO:0000318"/>
    <property type="project" value="GO_Central"/>
</dbReference>
<dbReference type="GO" id="GO:0000027">
    <property type="term" value="P:ribosomal large subunit assembly"/>
    <property type="evidence" value="ECO:0007669"/>
    <property type="project" value="UniProtKB-UniRule"/>
</dbReference>
<dbReference type="GO" id="GO:0006401">
    <property type="term" value="P:RNA catabolic process"/>
    <property type="evidence" value="ECO:0007669"/>
    <property type="project" value="UniProtKB-UniRule"/>
</dbReference>
<dbReference type="CDD" id="cd00268">
    <property type="entry name" value="DEADc"/>
    <property type="match status" value="1"/>
</dbReference>
<dbReference type="CDD" id="cd18787">
    <property type="entry name" value="SF2_C_DEAD"/>
    <property type="match status" value="1"/>
</dbReference>
<dbReference type="FunFam" id="3.40.50.300:FF:000108">
    <property type="entry name" value="ATP-dependent RNA helicase RhlE"/>
    <property type="match status" value="1"/>
</dbReference>
<dbReference type="Gene3D" id="3.30.70.330">
    <property type="match status" value="1"/>
</dbReference>
<dbReference type="Gene3D" id="3.40.50.300">
    <property type="entry name" value="P-loop containing nucleotide triphosphate hydrolases"/>
    <property type="match status" value="2"/>
</dbReference>
<dbReference type="HAMAP" id="MF_00964">
    <property type="entry name" value="DEAD_helicase_DeaD"/>
    <property type="match status" value="1"/>
</dbReference>
<dbReference type="InterPro" id="IPR005580">
    <property type="entry name" value="DbpA/CsdA_RNA-bd_dom"/>
</dbReference>
<dbReference type="InterPro" id="IPR011545">
    <property type="entry name" value="DEAD/DEAH_box_helicase_dom"/>
</dbReference>
<dbReference type="InterPro" id="IPR050547">
    <property type="entry name" value="DEAD_box_RNA_helicases"/>
</dbReference>
<dbReference type="InterPro" id="IPR028618">
    <property type="entry name" value="DEAD_helicase_DeaD"/>
</dbReference>
<dbReference type="InterPro" id="IPR014001">
    <property type="entry name" value="Helicase_ATP-bd"/>
</dbReference>
<dbReference type="InterPro" id="IPR001650">
    <property type="entry name" value="Helicase_C-like"/>
</dbReference>
<dbReference type="InterPro" id="IPR012677">
    <property type="entry name" value="Nucleotide-bd_a/b_plait_sf"/>
</dbReference>
<dbReference type="InterPro" id="IPR027417">
    <property type="entry name" value="P-loop_NTPase"/>
</dbReference>
<dbReference type="InterPro" id="IPR000629">
    <property type="entry name" value="RNA-helicase_DEAD-box_CS"/>
</dbReference>
<dbReference type="InterPro" id="IPR014014">
    <property type="entry name" value="RNA_helicase_DEAD_Q_motif"/>
</dbReference>
<dbReference type="PANTHER" id="PTHR47963:SF8">
    <property type="entry name" value="ATP-DEPENDENT RNA HELICASE DEAD"/>
    <property type="match status" value="1"/>
</dbReference>
<dbReference type="PANTHER" id="PTHR47963">
    <property type="entry name" value="DEAD-BOX ATP-DEPENDENT RNA HELICASE 47, MITOCHONDRIAL"/>
    <property type="match status" value="1"/>
</dbReference>
<dbReference type="Pfam" id="PF03880">
    <property type="entry name" value="DbpA"/>
    <property type="match status" value="1"/>
</dbReference>
<dbReference type="Pfam" id="PF00270">
    <property type="entry name" value="DEAD"/>
    <property type="match status" value="1"/>
</dbReference>
<dbReference type="Pfam" id="PF25399">
    <property type="entry name" value="DeaD_dimer"/>
    <property type="match status" value="1"/>
</dbReference>
<dbReference type="Pfam" id="PF00271">
    <property type="entry name" value="Helicase_C"/>
    <property type="match status" value="1"/>
</dbReference>
<dbReference type="SMART" id="SM00487">
    <property type="entry name" value="DEXDc"/>
    <property type="match status" value="1"/>
</dbReference>
<dbReference type="SMART" id="SM00490">
    <property type="entry name" value="HELICc"/>
    <property type="match status" value="1"/>
</dbReference>
<dbReference type="SUPFAM" id="SSF52540">
    <property type="entry name" value="P-loop containing nucleoside triphosphate hydrolases"/>
    <property type="match status" value="1"/>
</dbReference>
<dbReference type="PROSITE" id="PS00039">
    <property type="entry name" value="DEAD_ATP_HELICASE"/>
    <property type="match status" value="1"/>
</dbReference>
<dbReference type="PROSITE" id="PS51192">
    <property type="entry name" value="HELICASE_ATP_BIND_1"/>
    <property type="match status" value="1"/>
</dbReference>
<dbReference type="PROSITE" id="PS51194">
    <property type="entry name" value="HELICASE_CTER"/>
    <property type="match status" value="1"/>
</dbReference>
<dbReference type="PROSITE" id="PS51195">
    <property type="entry name" value="Q_MOTIF"/>
    <property type="match status" value="1"/>
</dbReference>
<keyword id="KW-0067">ATP-binding</keyword>
<keyword id="KW-0963">Cytoplasm</keyword>
<keyword id="KW-0347">Helicase</keyword>
<keyword id="KW-0378">Hydrolase</keyword>
<keyword id="KW-0547">Nucleotide-binding</keyword>
<keyword id="KW-1185">Reference proteome</keyword>
<keyword id="KW-0694">RNA-binding</keyword>
<keyword id="KW-0346">Stress response</keyword>